<proteinExistence type="inferred from homology"/>
<comment type="function">
    <text evidence="1">Catalyzes the removal of terminal sialic acid residues from viral and cellular glycoconjugates. Cleaves off the terminal sialic acids on the glycosylated HA during virus budding to facilitate virus release. Additionally helps virus spread through the circulation by further removing sialic acids from the cell surface. These cleavages prevent self-aggregation and ensure the efficient spread of the progeny virus from cell to cell. Otherwise, infection would be limited to one round of replication. Described as a receptor-destroying enzyme because it cleaves a terminal sialic acid from the cellular receptors. May facilitate viral invasion of the upper airways by cleaving the sialic acid moieties on the mucin of the airway epithelial cells. Likely to plays a role in the budding process through its association with lipid rafts during intracellular transport. May additionally display a raft-association independent effect on budding. Plays a role in the determination of host range restriction on replication and virulence. Sialidase activity in late endosome/lysosome traffic seems to enhance virus replication.</text>
</comment>
<comment type="catalytic activity">
    <reaction evidence="1">
        <text>Hydrolysis of alpha-(2-&gt;3)-, alpha-(2-&gt;6)-, alpha-(2-&gt;8)- glycosidic linkages of terminal sialic acid residues in oligosaccharides, glycoproteins, glycolipids, colominic acid and synthetic substrates.</text>
        <dbReference type="EC" id="3.2.1.18"/>
    </reaction>
</comment>
<comment type="cofactor">
    <cofactor evidence="1">
        <name>Ca(2+)</name>
        <dbReference type="ChEBI" id="CHEBI:29108"/>
    </cofactor>
</comment>
<comment type="activity regulation">
    <text evidence="1">Inhibited by the neuraminidase inhibitors zanamivir (Relenza) and oseltamivir (Tamiflu). These drugs interfere with the release of progeny virus from infected cells and are effective against all influenza strains. Resistance to neuraminidase inhibitors is quite rare.</text>
</comment>
<comment type="subunit">
    <text evidence="1">Homotetramer.</text>
</comment>
<comment type="subcellular location">
    <subcellularLocation>
        <location evidence="1">Virion membrane</location>
    </subcellularLocation>
    <subcellularLocation>
        <location evidence="1">Host apical cell membrane</location>
        <topology evidence="1">Single-pass type II membrane protein</topology>
    </subcellularLocation>
    <text evidence="1">Preferentially accumulates at the apical plasma membrane in infected polarized epithelial cells, which is the virus assembly site. Uses lipid rafts for cell surface transport and apical sorting. In the virion, forms a mushroom-shaped spike on the surface of the membrane.</text>
</comment>
<comment type="domain">
    <text evidence="1">Intact N-terminus is essential for virion morphogenesis. Possesses two apical sorting signals, one in the ectodomain, which is likely to be a glycan, and the other in the transmembrane domain. The transmembrane domain also plays a role in lipid raft association.</text>
</comment>
<comment type="PTM">
    <text evidence="1">N-glycosylated.</text>
</comment>
<comment type="miscellaneous">
    <text>The influenza A genome consist of 8 RNA segments. Genetic variation of hemagglutinin and/or neuraminidase genes results in the emergence of new influenza strains. The mechanism of variation can be the result of point mutations or the result of genetic reassortment between segments of two different strains.</text>
</comment>
<comment type="similarity">
    <text evidence="1">Belongs to the glycosyl hydrolase 34 family.</text>
</comment>
<sequence>MNPNQKIITIGSICMGIGIISLILQIGNIISMWVSHSIQTENQNHHEACNPSIAGQDAASVALAGNSSLCPISGWAIYSKDNGIRIGSKGDVFVIREPFISCSHLECRTFFLTQGALLNDKHSNGTVKDRSPYRTLMSCPVGEAPSPYNSRFVSVAWSASACHDGMGWLTIGISGPDNGAVAVLKYNGIITDTIKSWKNNILRTQESECACINGSCFTIMTDGPSNGQASYKIFKIEKGKVVKSSELNAPNYHYEECSCYPDAGEVMCVCRDNWHGSNRPWVSFNKNLDYQIGYICSGVFGDNPRPNDGTGSCGPVSSNGAYGIKGFSFKYGNGVWIGRTKSTSSRSGFEMIWDPNGWTETDSSFSVKQDIVAITDWSGYSGSFVQHPELTGLDCMRPCFWVELIRGRPNHNTIWTSGSSISFCGVNSDTVGWSWPDGAELPFTIDK</sequence>
<name>NRAM_I34A0</name>
<keyword id="KW-0106">Calcium</keyword>
<keyword id="KW-1015">Disulfide bond</keyword>
<keyword id="KW-0325">Glycoprotein</keyword>
<keyword id="KW-0326">Glycosidase</keyword>
<keyword id="KW-1032">Host cell membrane</keyword>
<keyword id="KW-1043">Host membrane</keyword>
<keyword id="KW-0378">Hydrolase</keyword>
<keyword id="KW-0472">Membrane</keyword>
<keyword id="KW-0479">Metal-binding</keyword>
<keyword id="KW-0735">Signal-anchor</keyword>
<keyword id="KW-0812">Transmembrane</keyword>
<keyword id="KW-1133">Transmembrane helix</keyword>
<keyword id="KW-0946">Virion</keyword>
<reference key="1">
    <citation type="submission" date="1990-08" db="EMBL/GenBank/DDBJ databases">
        <title>Influenza A virus neuraminidase sequence.</title>
        <authorList>
            <person name="Williamson R."/>
            <person name="McCauley J.W."/>
            <person name="Inglis S.C."/>
        </authorList>
    </citation>
    <scope>NUCLEOTIDE SEQUENCE [GENOMIC RNA]</scope>
</reference>
<reference key="2">
    <citation type="journal article" date="2004" name="Virus Res.">
        <title>Assembly and budding of influenza virus.</title>
        <authorList>
            <person name="Nayak D.P."/>
            <person name="Hui E.K."/>
            <person name="Barman S."/>
        </authorList>
    </citation>
    <scope>REVIEW</scope>
</reference>
<reference key="3">
    <citation type="journal article" date="2005" name="N. Engl. J. Med.">
        <title>Neuraminidase inhibitors for influenza.</title>
        <authorList>
            <person name="Moscona A."/>
        </authorList>
    </citation>
    <scope>REVIEW</scope>
</reference>
<reference key="4">
    <citation type="journal article" date="2005" name="Biol. Pharm. Bull.">
        <title>Sialobiology of influenza: molecular mechanism of host range variation of influenza viruses.</title>
        <authorList>
            <person name="Suzuki Y."/>
        </authorList>
    </citation>
    <scope>REVIEW</scope>
</reference>
<protein>
    <recommendedName>
        <fullName evidence="1">Neuraminidase</fullName>
        <ecNumber evidence="1">3.2.1.18</ecNumber>
    </recommendedName>
</protein>
<evidence type="ECO:0000255" key="1">
    <source>
        <dbReference type="HAMAP-Rule" id="MF_04071"/>
    </source>
</evidence>
<organismHost>
    <name type="scientific">Aves</name>
    <dbReference type="NCBI Taxonomy" id="8782"/>
</organismHost>
<dbReference type="EC" id="3.2.1.18" evidence="1"/>
<dbReference type="EMBL" id="X52226">
    <property type="protein sequence ID" value="CAA36475.1"/>
    <property type="molecule type" value="Genomic_RNA"/>
</dbReference>
<dbReference type="PIR" id="S20711">
    <property type="entry name" value="S20711"/>
</dbReference>
<dbReference type="SMR" id="Q64968"/>
<dbReference type="CAZy" id="GH34">
    <property type="family name" value="Glycoside Hydrolase Family 34"/>
</dbReference>
<dbReference type="GlyCosmos" id="Q64968">
    <property type="glycosylation" value="3 sites, No reported glycans"/>
</dbReference>
<dbReference type="SABIO-RK" id="Q64968"/>
<dbReference type="GO" id="GO:0020002">
    <property type="term" value="C:host cell plasma membrane"/>
    <property type="evidence" value="ECO:0007669"/>
    <property type="project" value="UniProtKB-SubCell"/>
</dbReference>
<dbReference type="GO" id="GO:0016020">
    <property type="term" value="C:membrane"/>
    <property type="evidence" value="ECO:0007669"/>
    <property type="project" value="UniProtKB-UniRule"/>
</dbReference>
<dbReference type="GO" id="GO:0055036">
    <property type="term" value="C:virion membrane"/>
    <property type="evidence" value="ECO:0007669"/>
    <property type="project" value="UniProtKB-SubCell"/>
</dbReference>
<dbReference type="GO" id="GO:0004308">
    <property type="term" value="F:exo-alpha-sialidase activity"/>
    <property type="evidence" value="ECO:0007669"/>
    <property type="project" value="UniProtKB-UniRule"/>
</dbReference>
<dbReference type="GO" id="GO:0046872">
    <property type="term" value="F:metal ion binding"/>
    <property type="evidence" value="ECO:0007669"/>
    <property type="project" value="UniProtKB-UniRule"/>
</dbReference>
<dbReference type="GO" id="GO:0005975">
    <property type="term" value="P:carbohydrate metabolic process"/>
    <property type="evidence" value="ECO:0007669"/>
    <property type="project" value="InterPro"/>
</dbReference>
<dbReference type="GO" id="GO:0046761">
    <property type="term" value="P:viral budding from plasma membrane"/>
    <property type="evidence" value="ECO:0007669"/>
    <property type="project" value="UniProtKB-UniRule"/>
</dbReference>
<dbReference type="CDD" id="cd15483">
    <property type="entry name" value="Influenza_NA"/>
    <property type="match status" value="1"/>
</dbReference>
<dbReference type="FunFam" id="2.120.10.10:FF:000001">
    <property type="entry name" value="Neuraminidase"/>
    <property type="match status" value="1"/>
</dbReference>
<dbReference type="Gene3D" id="2.120.10.10">
    <property type="match status" value="1"/>
</dbReference>
<dbReference type="HAMAP" id="MF_04071">
    <property type="entry name" value="INFV_NRAM"/>
    <property type="match status" value="1"/>
</dbReference>
<dbReference type="InterPro" id="IPR001860">
    <property type="entry name" value="Glyco_hydro_34"/>
</dbReference>
<dbReference type="InterPro" id="IPR033654">
    <property type="entry name" value="Sialidase_Influenza_A/B"/>
</dbReference>
<dbReference type="InterPro" id="IPR036278">
    <property type="entry name" value="Sialidase_sf"/>
</dbReference>
<dbReference type="Pfam" id="PF00064">
    <property type="entry name" value="Neur"/>
    <property type="match status" value="1"/>
</dbReference>
<dbReference type="SUPFAM" id="SSF50939">
    <property type="entry name" value="Sialidases"/>
    <property type="match status" value="1"/>
</dbReference>
<organism>
    <name type="scientific">Influenza A virus (strain A/Fowl plague virus/Rostock/8/1934 H7N1)</name>
    <dbReference type="NCBI Taxonomy" id="392810"/>
    <lineage>
        <taxon>Viruses</taxon>
        <taxon>Riboviria</taxon>
        <taxon>Orthornavirae</taxon>
        <taxon>Negarnaviricota</taxon>
        <taxon>Polyploviricotina</taxon>
        <taxon>Insthoviricetes</taxon>
        <taxon>Articulavirales</taxon>
        <taxon>Orthomyxoviridae</taxon>
        <taxon>Alphainfluenzavirus</taxon>
        <taxon>Alphainfluenzavirus influenzae</taxon>
        <taxon>Influenza A virus</taxon>
    </lineage>
</organism>
<gene>
    <name evidence="1" type="primary">NA</name>
</gene>
<accession>Q64968</accession>
<feature type="chain" id="PRO_0000280131" description="Neuraminidase">
    <location>
        <begin position="1"/>
        <end position="447"/>
    </location>
</feature>
<feature type="topological domain" description="Intravirion" evidence="1">
    <location>
        <begin position="1"/>
        <end position="6"/>
    </location>
</feature>
<feature type="transmembrane region" description="Helical" evidence="1">
    <location>
        <begin position="7"/>
        <end position="27"/>
    </location>
</feature>
<feature type="topological domain" description="Virion surface" evidence="1">
    <location>
        <begin position="28"/>
        <end position="447"/>
    </location>
</feature>
<feature type="region of interest" description="Involved in apical transport and lipid raft association" evidence="1">
    <location>
        <begin position="11"/>
        <end position="33"/>
    </location>
</feature>
<feature type="region of interest" description="Hypervariable stalk region" evidence="1">
    <location>
        <begin position="36"/>
        <end position="68"/>
    </location>
</feature>
<feature type="region of interest" description="Head of neuraminidase" evidence="1">
    <location>
        <begin position="69"/>
        <end position="447"/>
    </location>
</feature>
<feature type="active site" description="Proton donor/acceptor" evidence="1">
    <location>
        <position position="129"/>
    </location>
</feature>
<feature type="active site" description="Nucleophile" evidence="1">
    <location>
        <position position="380"/>
    </location>
</feature>
<feature type="binding site" evidence="1">
    <location>
        <position position="96"/>
    </location>
    <ligand>
        <name>substrate</name>
    </ligand>
</feature>
<feature type="binding site" evidence="1">
    <location>
        <position position="130"/>
    </location>
    <ligand>
        <name>substrate</name>
    </ligand>
</feature>
<feature type="binding site" evidence="1">
    <location>
        <begin position="255"/>
        <end position="256"/>
    </location>
    <ligand>
        <name>substrate</name>
    </ligand>
</feature>
<feature type="binding site" evidence="1">
    <location>
        <position position="271"/>
    </location>
    <ligand>
        <name>substrate</name>
    </ligand>
</feature>
<feature type="binding site" evidence="1">
    <location>
        <position position="272"/>
    </location>
    <ligand>
        <name>Ca(2+)</name>
        <dbReference type="ChEBI" id="CHEBI:29108"/>
    </ligand>
</feature>
<feature type="binding site" evidence="1">
    <location>
        <position position="276"/>
    </location>
    <ligand>
        <name>Ca(2+)</name>
        <dbReference type="ChEBI" id="CHEBI:29108"/>
    </ligand>
</feature>
<feature type="binding site" evidence="1">
    <location>
        <position position="302"/>
    </location>
    <ligand>
        <name>Ca(2+)</name>
        <dbReference type="ChEBI" id="CHEBI:29108"/>
    </ligand>
</feature>
<feature type="binding site" evidence="1">
    <location>
        <position position="346"/>
    </location>
    <ligand>
        <name>substrate</name>
    </ligand>
</feature>
<feature type="glycosylation site" description="N-linked (GlcNAc...) asparagine; by host" evidence="1">
    <location>
        <position position="66"/>
    </location>
</feature>
<feature type="glycosylation site" description="N-linked (GlcNAc...) asparagine; by host" evidence="1">
    <location>
        <position position="124"/>
    </location>
</feature>
<feature type="glycosylation site" description="N-linked (GlcNAc...) asparagine; by host" evidence="1">
    <location>
        <position position="213"/>
    </location>
</feature>
<feature type="disulfide bond" evidence="1">
    <location>
        <begin position="70"/>
        <end position="395"/>
    </location>
</feature>
<feature type="disulfide bond" evidence="1">
    <location>
        <begin position="102"/>
        <end position="107"/>
    </location>
</feature>
<feature type="disulfide bond" evidence="1">
    <location>
        <begin position="162"/>
        <end position="209"/>
    </location>
</feature>
<feature type="disulfide bond" evidence="1">
    <location>
        <begin position="211"/>
        <end position="216"/>
    </location>
</feature>
<feature type="disulfide bond" evidence="1">
    <location>
        <begin position="257"/>
        <end position="270"/>
    </location>
</feature>
<feature type="disulfide bond" evidence="1">
    <location>
        <begin position="259"/>
        <end position="268"/>
    </location>
</feature>
<feature type="disulfide bond" evidence="1">
    <location>
        <begin position="296"/>
        <end position="313"/>
    </location>
</feature>
<feature type="disulfide bond" evidence="1">
    <location>
        <begin position="399"/>
        <end position="424"/>
    </location>
</feature>